<proteinExistence type="evidence at protein level"/>
<reference key="1">
    <citation type="journal article" date="1996" name="Microbiology">
        <title>The 25 degrees-36 degrees region of the Bacillus subtilis chromosome: determination of the sequence of a 146 kb segment and identification of 113 genes.</title>
        <authorList>
            <person name="Yamane K."/>
            <person name="Kumano M."/>
            <person name="Kurita K."/>
        </authorList>
    </citation>
    <scope>NUCLEOTIDE SEQUENCE [GENOMIC DNA]</scope>
    <source>
        <strain>168</strain>
    </source>
</reference>
<reference key="2">
    <citation type="journal article" date="1997" name="Nature">
        <title>The complete genome sequence of the Gram-positive bacterium Bacillus subtilis.</title>
        <authorList>
            <person name="Kunst F."/>
            <person name="Ogasawara N."/>
            <person name="Moszer I."/>
            <person name="Albertini A.M."/>
            <person name="Alloni G."/>
            <person name="Azevedo V."/>
            <person name="Bertero M.G."/>
            <person name="Bessieres P."/>
            <person name="Bolotin A."/>
            <person name="Borchert S."/>
            <person name="Borriss R."/>
            <person name="Boursier L."/>
            <person name="Brans A."/>
            <person name="Braun M."/>
            <person name="Brignell S.C."/>
            <person name="Bron S."/>
            <person name="Brouillet S."/>
            <person name="Bruschi C.V."/>
            <person name="Caldwell B."/>
            <person name="Capuano V."/>
            <person name="Carter N.M."/>
            <person name="Choi S.-K."/>
            <person name="Codani J.-J."/>
            <person name="Connerton I.F."/>
            <person name="Cummings N.J."/>
            <person name="Daniel R.A."/>
            <person name="Denizot F."/>
            <person name="Devine K.M."/>
            <person name="Duesterhoeft A."/>
            <person name="Ehrlich S.D."/>
            <person name="Emmerson P.T."/>
            <person name="Entian K.-D."/>
            <person name="Errington J."/>
            <person name="Fabret C."/>
            <person name="Ferrari E."/>
            <person name="Foulger D."/>
            <person name="Fritz C."/>
            <person name="Fujita M."/>
            <person name="Fujita Y."/>
            <person name="Fuma S."/>
            <person name="Galizzi A."/>
            <person name="Galleron N."/>
            <person name="Ghim S.-Y."/>
            <person name="Glaser P."/>
            <person name="Goffeau A."/>
            <person name="Golightly E.J."/>
            <person name="Grandi G."/>
            <person name="Guiseppi G."/>
            <person name="Guy B.J."/>
            <person name="Haga K."/>
            <person name="Haiech J."/>
            <person name="Harwood C.R."/>
            <person name="Henaut A."/>
            <person name="Hilbert H."/>
            <person name="Holsappel S."/>
            <person name="Hosono S."/>
            <person name="Hullo M.-F."/>
            <person name="Itaya M."/>
            <person name="Jones L.-M."/>
            <person name="Joris B."/>
            <person name="Karamata D."/>
            <person name="Kasahara Y."/>
            <person name="Klaerr-Blanchard M."/>
            <person name="Klein C."/>
            <person name="Kobayashi Y."/>
            <person name="Koetter P."/>
            <person name="Koningstein G."/>
            <person name="Krogh S."/>
            <person name="Kumano M."/>
            <person name="Kurita K."/>
            <person name="Lapidus A."/>
            <person name="Lardinois S."/>
            <person name="Lauber J."/>
            <person name="Lazarevic V."/>
            <person name="Lee S.-M."/>
            <person name="Levine A."/>
            <person name="Liu H."/>
            <person name="Masuda S."/>
            <person name="Mauel C."/>
            <person name="Medigue C."/>
            <person name="Medina N."/>
            <person name="Mellado R.P."/>
            <person name="Mizuno M."/>
            <person name="Moestl D."/>
            <person name="Nakai S."/>
            <person name="Noback M."/>
            <person name="Noone D."/>
            <person name="O'Reilly M."/>
            <person name="Ogawa K."/>
            <person name="Ogiwara A."/>
            <person name="Oudega B."/>
            <person name="Park S.-H."/>
            <person name="Parro V."/>
            <person name="Pohl T.M."/>
            <person name="Portetelle D."/>
            <person name="Porwollik S."/>
            <person name="Prescott A.M."/>
            <person name="Presecan E."/>
            <person name="Pujic P."/>
            <person name="Purnelle B."/>
            <person name="Rapoport G."/>
            <person name="Rey M."/>
            <person name="Reynolds S."/>
            <person name="Rieger M."/>
            <person name="Rivolta C."/>
            <person name="Rocha E."/>
            <person name="Roche B."/>
            <person name="Rose M."/>
            <person name="Sadaie Y."/>
            <person name="Sato T."/>
            <person name="Scanlan E."/>
            <person name="Schleich S."/>
            <person name="Schroeter R."/>
            <person name="Scoffone F."/>
            <person name="Sekiguchi J."/>
            <person name="Sekowska A."/>
            <person name="Seror S.J."/>
            <person name="Serror P."/>
            <person name="Shin B.-S."/>
            <person name="Soldo B."/>
            <person name="Sorokin A."/>
            <person name="Tacconi E."/>
            <person name="Takagi T."/>
            <person name="Takahashi H."/>
            <person name="Takemaru K."/>
            <person name="Takeuchi M."/>
            <person name="Tamakoshi A."/>
            <person name="Tanaka T."/>
            <person name="Terpstra P."/>
            <person name="Tognoni A."/>
            <person name="Tosato V."/>
            <person name="Uchiyama S."/>
            <person name="Vandenbol M."/>
            <person name="Vannier F."/>
            <person name="Vassarotti A."/>
            <person name="Viari A."/>
            <person name="Wambutt R."/>
            <person name="Wedler E."/>
            <person name="Wedler H."/>
            <person name="Weitzenegger T."/>
            <person name="Winters P."/>
            <person name="Wipat A."/>
            <person name="Yamamoto H."/>
            <person name="Yamane K."/>
            <person name="Yasumoto K."/>
            <person name="Yata K."/>
            <person name="Yoshida K."/>
            <person name="Yoshikawa H.-F."/>
            <person name="Zumstein E."/>
            <person name="Yoshikawa H."/>
            <person name="Danchin A."/>
        </authorList>
    </citation>
    <scope>NUCLEOTIDE SEQUENCE [LARGE SCALE GENOMIC DNA]</scope>
    <source>
        <strain>168</strain>
    </source>
</reference>
<reference key="3">
    <citation type="journal article" date="2009" name="J. Bacteriol.">
        <title>Copper acquisition is mediated by ycnJ and regulated by ycnK and csoR in Bacillus subtilis.</title>
        <authorList>
            <person name="Chillappagari S."/>
            <person name="Miethke M."/>
            <person name="Trip H."/>
            <person name="Kuipers O.P."/>
            <person name="Marahiel M.A."/>
        </authorList>
    </citation>
    <scope>INDUCTION</scope>
    <source>
        <strain>ATCC 21332 / IAM 1213</strain>
    </source>
</reference>
<reference evidence="9 10" key="4">
    <citation type="journal article" date="2021" name="J. Biol. Chem.">
        <title>The YcnI protein from Bacillus subtilis contains a copper-binding domain.</title>
        <authorList>
            <person name="Damle M.S."/>
            <person name="Singh A.N."/>
            <person name="Peters S.C."/>
            <person name="Szalai V.A."/>
            <person name="Fisher O.S."/>
        </authorList>
    </citation>
    <scope>X-RAY CRYSTALLOGRAPHY (2.05 ANGSTROMS) OF 27-155 IN COMPLEX WITH CU(2+)</scope>
    <scope>FUNCTION</scope>
    <scope>DOMAIN</scope>
</reference>
<reference evidence="11" key="5">
    <citation type="journal article" date="2024" name="J. Inorg. Biochem.">
        <title>Stabilization of a Cu-binding site by a highly conserved tryptophan residue.</title>
        <authorList>
            <person name="de Oliveira Silva Y.R."/>
            <person name="Zheng D."/>
            <person name="Peters S.C."/>
            <person name="Fisher O.S."/>
        </authorList>
    </citation>
    <scope>X-RAY CRYSTALLOGRAPHY (1.95 ANGSTROMS) OF 27-155 OF MUTANT PHE-137 IN COMPLEX WITH CU(2+)</scope>
    <scope>FUNCTION</scope>
    <scope>MUTAGENESIS OF HIS-27 AND TRP-137</scope>
</reference>
<evidence type="ECO:0000255" key="1"/>
<evidence type="ECO:0000256" key="2">
    <source>
        <dbReference type="SAM" id="MobiDB-lite"/>
    </source>
</evidence>
<evidence type="ECO:0000269" key="3">
    <source>
    </source>
</evidence>
<evidence type="ECO:0000269" key="4">
    <source>
    </source>
</evidence>
<evidence type="ECO:0000269" key="5">
    <source>
    </source>
</evidence>
<evidence type="ECO:0000305" key="6"/>
<evidence type="ECO:0000305" key="7">
    <source>
    </source>
</evidence>
<evidence type="ECO:0000312" key="8">
    <source>
        <dbReference type="EMBL" id="CAB12202.1"/>
    </source>
</evidence>
<evidence type="ECO:0007744" key="9">
    <source>
        <dbReference type="PDB" id="7ME6"/>
    </source>
</evidence>
<evidence type="ECO:0007744" key="10">
    <source>
        <dbReference type="PDB" id="7MEK"/>
    </source>
</evidence>
<evidence type="ECO:0007744" key="11">
    <source>
        <dbReference type="PDB" id="8UM6"/>
    </source>
</evidence>
<evidence type="ECO:0007829" key="12">
    <source>
        <dbReference type="PDB" id="7ME6"/>
    </source>
</evidence>
<evidence type="ECO:0007829" key="13">
    <source>
        <dbReference type="PDB" id="8UM6"/>
    </source>
</evidence>
<feature type="signal peptide" evidence="1">
    <location>
        <begin position="1"/>
        <end position="26"/>
    </location>
</feature>
<feature type="chain" id="PRO_0000360196" description="Copper-binding protein CutI">
    <location>
        <begin position="27"/>
        <end position="204"/>
    </location>
</feature>
<feature type="topological domain" description="Extracellular" evidence="7">
    <location>
        <begin position="27"/>
        <end position="178"/>
    </location>
</feature>
<feature type="transmembrane region" description="Helical" evidence="1">
    <location>
        <begin position="179"/>
        <end position="199"/>
    </location>
</feature>
<feature type="topological domain" description="Cytoplasmic" evidence="6">
    <location>
        <begin position="200"/>
        <end position="204"/>
    </location>
</feature>
<feature type="region of interest" description="Disordered" evidence="2">
    <location>
        <begin position="146"/>
        <end position="176"/>
    </location>
</feature>
<feature type="compositionally biased region" description="Polar residues" evidence="2">
    <location>
        <begin position="147"/>
        <end position="157"/>
    </location>
</feature>
<feature type="compositionally biased region" description="Basic and acidic residues" evidence="2">
    <location>
        <begin position="158"/>
        <end position="168"/>
    </location>
</feature>
<feature type="binding site" evidence="4 5 10 11">
    <location>
        <position position="27"/>
    </location>
    <ligand>
        <name>Cu(2+)</name>
        <dbReference type="ChEBI" id="CHEBI:29036"/>
    </ligand>
</feature>
<feature type="binding site" evidence="4 5 10 11">
    <location>
        <position position="50"/>
    </location>
    <ligand>
        <name>Cu(2+)</name>
        <dbReference type="ChEBI" id="CHEBI:29036"/>
    </ligand>
</feature>
<feature type="site" description="Stabilizes the metal-protein interaction" evidence="5">
    <location>
        <position position="137"/>
    </location>
</feature>
<feature type="mutagenesis site" description="Decreases the ability to bind Cu(II) by approximately 2-fold and abolishes the ability to bind Cu(I)." evidence="5">
    <original>H</original>
    <variation>A</variation>
    <location>
        <position position="27"/>
    </location>
</feature>
<feature type="mutagenesis site" description="Does not decrease Cu-binding capacity." evidence="5">
    <original>W</original>
    <variation>A</variation>
    <location>
        <position position="137"/>
    </location>
</feature>
<feature type="mutagenesis site" description="Retains 60-80% Cu-binding for both oxidation states." evidence="5">
    <original>W</original>
    <variation>F</variation>
    <location>
        <position position="137"/>
    </location>
</feature>
<feature type="strand" evidence="13">
    <location>
        <begin position="29"/>
        <end position="31"/>
    </location>
</feature>
<feature type="strand" evidence="13">
    <location>
        <begin position="33"/>
        <end position="36"/>
    </location>
</feature>
<feature type="strand" evidence="13">
    <location>
        <begin position="39"/>
        <end position="48"/>
    </location>
</feature>
<feature type="strand" evidence="13">
    <location>
        <begin position="51"/>
        <end position="53"/>
    </location>
</feature>
<feature type="strand" evidence="13">
    <location>
        <begin position="55"/>
        <end position="61"/>
    </location>
</feature>
<feature type="strand" evidence="13">
    <location>
        <begin position="67"/>
        <end position="71"/>
    </location>
</feature>
<feature type="strand" evidence="13">
    <location>
        <begin position="77"/>
        <end position="83"/>
    </location>
</feature>
<feature type="strand" evidence="12">
    <location>
        <begin position="85"/>
        <end position="87"/>
    </location>
</feature>
<feature type="strand" evidence="13">
    <location>
        <begin position="89"/>
        <end position="98"/>
    </location>
</feature>
<feature type="strand" evidence="13">
    <location>
        <begin position="105"/>
        <end position="113"/>
    </location>
</feature>
<feature type="strand" evidence="13">
    <location>
        <begin position="119"/>
        <end position="123"/>
    </location>
</feature>
<feature type="strand" evidence="13">
    <location>
        <begin position="125"/>
        <end position="129"/>
    </location>
</feature>
<feature type="strand" evidence="13">
    <location>
        <begin position="134"/>
        <end position="137"/>
    </location>
</feature>
<feature type="strand" evidence="13">
    <location>
        <begin position="143"/>
        <end position="146"/>
    </location>
</feature>
<feature type="strand" evidence="13">
    <location>
        <begin position="148"/>
        <end position="153"/>
    </location>
</feature>
<organism>
    <name type="scientific">Bacillus subtilis (strain 168)</name>
    <dbReference type="NCBI Taxonomy" id="224308"/>
    <lineage>
        <taxon>Bacteria</taxon>
        <taxon>Bacillati</taxon>
        <taxon>Bacillota</taxon>
        <taxon>Bacilli</taxon>
        <taxon>Bacillales</taxon>
        <taxon>Bacillaceae</taxon>
        <taxon>Bacillus</taxon>
    </lineage>
</organism>
<gene>
    <name evidence="8" type="primary">cutI</name>
    <name type="synonym">ycnI</name>
    <name evidence="8" type="ordered locus">BSU03940</name>
</gene>
<comment type="function">
    <text evidence="4 5">Copper-binding protein that probably plays a role in copper homeostasis (PubMed:34400169, PubMed:38342077). May act as metallochaperone, possibly to facilitate copper uptake via the CutJ/YcnJ importer (PubMed:38342077). Preferentially binds Cu in its oxidized Cu(II) state in a 1:1 stoichiometry (PubMed:38342077).</text>
</comment>
<comment type="subcellular location">
    <subcellularLocation>
        <location evidence="6">Cell membrane</location>
        <topology evidence="1">Single-pass type I membrane protein</topology>
    </subcellularLocation>
</comment>
<comment type="induction">
    <text evidence="3">Significantly induced under copper-limiting conditions.</text>
</comment>
<comment type="domain">
    <text evidence="4">Adopts a cupredoxin fold (PubMed:34400169). Employs a monohistidine brace motif to bind copper (PubMed:34400169).</text>
</comment>
<name>CUTI_BACSU</name>
<sequence>MLKKIALTLCPAIVGSLLFFTAPASAHVSVKPAESAAGSWETYTMKVPSEKNLPTTKVVLKMPKDVEFQQYEPIPGWKVSTQKHDDKSVSVTWEATDGGIQEGQFQQFTFVAKNPDKAEEAAWDAYQYYKDGSIVEWTGDEDADTPHSITNITSAKQVTDEHGATKTEDDSENSGSSALDITAMVLSAAAIILSVAALVKKKRA</sequence>
<dbReference type="EMBL" id="D50453">
    <property type="protein sequence ID" value="BAA09025.1"/>
    <property type="molecule type" value="Genomic_DNA"/>
</dbReference>
<dbReference type="EMBL" id="AL009126">
    <property type="protein sequence ID" value="CAB12202.1"/>
    <property type="molecule type" value="Genomic_DNA"/>
</dbReference>
<dbReference type="PIR" id="E69764">
    <property type="entry name" value="E69764"/>
</dbReference>
<dbReference type="RefSeq" id="NP_388276.1">
    <property type="nucleotide sequence ID" value="NC_000964.3"/>
</dbReference>
<dbReference type="RefSeq" id="WP_003246657.1">
    <property type="nucleotide sequence ID" value="NZ_OZ025638.1"/>
</dbReference>
<dbReference type="PDB" id="7ME6">
    <property type="method" value="X-ray"/>
    <property type="resolution" value="2.05 A"/>
    <property type="chains" value="A/B=27-155"/>
</dbReference>
<dbReference type="PDB" id="7MEK">
    <property type="method" value="X-ray"/>
    <property type="resolution" value="2.11 A"/>
    <property type="chains" value="A/B=27-155"/>
</dbReference>
<dbReference type="PDB" id="8UM6">
    <property type="method" value="X-ray"/>
    <property type="resolution" value="1.95 A"/>
    <property type="chains" value="A/B=27-155"/>
</dbReference>
<dbReference type="PDBsum" id="7ME6"/>
<dbReference type="PDBsum" id="7MEK"/>
<dbReference type="PDBsum" id="8UM6"/>
<dbReference type="SMR" id="P94431"/>
<dbReference type="FunCoup" id="P94431">
    <property type="interactions" value="5"/>
</dbReference>
<dbReference type="STRING" id="224308.BSU03940"/>
<dbReference type="jPOST" id="P94431"/>
<dbReference type="PaxDb" id="224308-BSU03940"/>
<dbReference type="EnsemblBacteria" id="CAB12202">
    <property type="protein sequence ID" value="CAB12202"/>
    <property type="gene ID" value="BSU_03940"/>
</dbReference>
<dbReference type="GeneID" id="938266"/>
<dbReference type="KEGG" id="bsu:BSU03940"/>
<dbReference type="PATRIC" id="fig|224308.179.peg.417"/>
<dbReference type="eggNOG" id="COG4549">
    <property type="taxonomic scope" value="Bacteria"/>
</dbReference>
<dbReference type="InParanoid" id="P94431"/>
<dbReference type="OrthoDB" id="69896at2"/>
<dbReference type="PhylomeDB" id="P94431"/>
<dbReference type="BioCyc" id="BSUB:BSU03940-MONOMER"/>
<dbReference type="Proteomes" id="UP000001570">
    <property type="component" value="Chromosome"/>
</dbReference>
<dbReference type="GO" id="GO:0005886">
    <property type="term" value="C:plasma membrane"/>
    <property type="evidence" value="ECO:0007669"/>
    <property type="project" value="UniProtKB-SubCell"/>
</dbReference>
<dbReference type="CDD" id="cd08545">
    <property type="entry name" value="YcnI_like"/>
    <property type="match status" value="1"/>
</dbReference>
<dbReference type="Gene3D" id="2.60.40.2230">
    <property type="entry name" value="Uncharacterised protein YcnI-like PF07987, DUF1775"/>
    <property type="match status" value="1"/>
</dbReference>
<dbReference type="InterPro" id="IPR012533">
    <property type="entry name" value="YcnI-like"/>
</dbReference>
<dbReference type="InterPro" id="IPR038507">
    <property type="entry name" value="YcnI-like_sf"/>
</dbReference>
<dbReference type="Pfam" id="PF07987">
    <property type="entry name" value="DUF1775"/>
    <property type="match status" value="1"/>
</dbReference>
<keyword id="KW-0002">3D-structure</keyword>
<keyword id="KW-1003">Cell membrane</keyword>
<keyword id="KW-0186">Copper</keyword>
<keyword id="KW-0472">Membrane</keyword>
<keyword id="KW-0479">Metal-binding</keyword>
<keyword id="KW-1185">Reference proteome</keyword>
<keyword id="KW-0732">Signal</keyword>
<keyword id="KW-0812">Transmembrane</keyword>
<keyword id="KW-1133">Transmembrane helix</keyword>
<accession>P94431</accession>
<accession>Q797N4</accession>
<protein>
    <recommendedName>
        <fullName evidence="6">Copper-binding protein CutI</fullName>
    </recommendedName>
</protein>